<organism>
    <name type="scientific">Thermus thermophilus (strain ATCC 27634 / DSM 579 / HB8)</name>
    <dbReference type="NCBI Taxonomy" id="300852"/>
    <lineage>
        <taxon>Bacteria</taxon>
        <taxon>Thermotogati</taxon>
        <taxon>Deinococcota</taxon>
        <taxon>Deinococci</taxon>
        <taxon>Thermales</taxon>
        <taxon>Thermaceae</taxon>
        <taxon>Thermus</taxon>
    </lineage>
</organism>
<name>TRPD_THET8</name>
<dbReference type="EC" id="2.4.2.18" evidence="1"/>
<dbReference type="EMBL" id="AP008226">
    <property type="protein sequence ID" value="BAD71665.1"/>
    <property type="molecule type" value="Genomic_DNA"/>
</dbReference>
<dbReference type="RefSeq" id="WP_011173866.1">
    <property type="nucleotide sequence ID" value="NC_006461.1"/>
</dbReference>
<dbReference type="RefSeq" id="YP_145108.1">
    <property type="nucleotide sequence ID" value="NC_006461.1"/>
</dbReference>
<dbReference type="PDB" id="2ELC">
    <property type="method" value="X-ray"/>
    <property type="resolution" value="1.55 A"/>
    <property type="chains" value="A/B/C/D=1-329"/>
</dbReference>
<dbReference type="PDBsum" id="2ELC"/>
<dbReference type="SMR" id="Q5SH88"/>
<dbReference type="EnsemblBacteria" id="BAD71665">
    <property type="protein sequence ID" value="BAD71665"/>
    <property type="gene ID" value="BAD71665"/>
</dbReference>
<dbReference type="GeneID" id="3169363"/>
<dbReference type="KEGG" id="ttj:TTHA1842"/>
<dbReference type="PATRIC" id="fig|300852.9.peg.1813"/>
<dbReference type="eggNOG" id="COG0547">
    <property type="taxonomic scope" value="Bacteria"/>
</dbReference>
<dbReference type="HOGENOM" id="CLU_034315_2_1_0"/>
<dbReference type="PhylomeDB" id="Q5SH88"/>
<dbReference type="UniPathway" id="UPA00035">
    <property type="reaction ID" value="UER00041"/>
</dbReference>
<dbReference type="EvolutionaryTrace" id="Q5SH88"/>
<dbReference type="Proteomes" id="UP000000532">
    <property type="component" value="Chromosome"/>
</dbReference>
<dbReference type="GO" id="GO:0005829">
    <property type="term" value="C:cytosol"/>
    <property type="evidence" value="ECO:0007669"/>
    <property type="project" value="TreeGrafter"/>
</dbReference>
<dbReference type="GO" id="GO:0004048">
    <property type="term" value="F:anthranilate phosphoribosyltransferase activity"/>
    <property type="evidence" value="ECO:0007669"/>
    <property type="project" value="UniProtKB-UniRule"/>
</dbReference>
<dbReference type="GO" id="GO:0000287">
    <property type="term" value="F:magnesium ion binding"/>
    <property type="evidence" value="ECO:0007669"/>
    <property type="project" value="UniProtKB-UniRule"/>
</dbReference>
<dbReference type="GO" id="GO:0000162">
    <property type="term" value="P:L-tryptophan biosynthetic process"/>
    <property type="evidence" value="ECO:0007669"/>
    <property type="project" value="UniProtKB-UniRule"/>
</dbReference>
<dbReference type="FunFam" id="3.40.1030.10:FF:000002">
    <property type="entry name" value="Anthranilate phosphoribosyltransferase"/>
    <property type="match status" value="1"/>
</dbReference>
<dbReference type="Gene3D" id="3.40.1030.10">
    <property type="entry name" value="Nucleoside phosphorylase/phosphoribosyltransferase catalytic domain"/>
    <property type="match status" value="1"/>
</dbReference>
<dbReference type="Gene3D" id="1.20.970.10">
    <property type="entry name" value="Transferase, Pyrimidine Nucleoside Phosphorylase, Chain C"/>
    <property type="match status" value="1"/>
</dbReference>
<dbReference type="HAMAP" id="MF_00211">
    <property type="entry name" value="TrpD"/>
    <property type="match status" value="1"/>
</dbReference>
<dbReference type="InterPro" id="IPR005940">
    <property type="entry name" value="Anthranilate_Pribosyl_Tfrase"/>
</dbReference>
<dbReference type="InterPro" id="IPR000312">
    <property type="entry name" value="Glycosyl_Trfase_fam3"/>
</dbReference>
<dbReference type="InterPro" id="IPR017459">
    <property type="entry name" value="Glycosyl_Trfase_fam3_N_dom"/>
</dbReference>
<dbReference type="InterPro" id="IPR036320">
    <property type="entry name" value="Glycosyl_Trfase_fam3_N_dom_sf"/>
</dbReference>
<dbReference type="InterPro" id="IPR035902">
    <property type="entry name" value="Nuc_phospho_transferase"/>
</dbReference>
<dbReference type="NCBIfam" id="TIGR01245">
    <property type="entry name" value="trpD"/>
    <property type="match status" value="1"/>
</dbReference>
<dbReference type="PANTHER" id="PTHR43285">
    <property type="entry name" value="ANTHRANILATE PHOSPHORIBOSYLTRANSFERASE"/>
    <property type="match status" value="1"/>
</dbReference>
<dbReference type="PANTHER" id="PTHR43285:SF2">
    <property type="entry name" value="ANTHRANILATE PHOSPHORIBOSYLTRANSFERASE"/>
    <property type="match status" value="1"/>
</dbReference>
<dbReference type="Pfam" id="PF02885">
    <property type="entry name" value="Glycos_trans_3N"/>
    <property type="match status" value="1"/>
</dbReference>
<dbReference type="Pfam" id="PF00591">
    <property type="entry name" value="Glycos_transf_3"/>
    <property type="match status" value="1"/>
</dbReference>
<dbReference type="SUPFAM" id="SSF52418">
    <property type="entry name" value="Nucleoside phosphorylase/phosphoribosyltransferase catalytic domain"/>
    <property type="match status" value="1"/>
</dbReference>
<dbReference type="SUPFAM" id="SSF47648">
    <property type="entry name" value="Nucleoside phosphorylase/phosphoribosyltransferase N-terminal domain"/>
    <property type="match status" value="1"/>
</dbReference>
<reference key="1">
    <citation type="submission" date="2004-11" db="EMBL/GenBank/DDBJ databases">
        <title>Complete genome sequence of Thermus thermophilus HB8.</title>
        <authorList>
            <person name="Masui R."/>
            <person name="Kurokawa K."/>
            <person name="Nakagawa N."/>
            <person name="Tokunaga F."/>
            <person name="Koyama Y."/>
            <person name="Shibata T."/>
            <person name="Oshima T."/>
            <person name="Yokoyama S."/>
            <person name="Yasunaga T."/>
            <person name="Kuramitsu S."/>
        </authorList>
    </citation>
    <scope>NUCLEOTIDE SEQUENCE [LARGE SCALE GENOMIC DNA]</scope>
    <source>
        <strain>ATCC 27634 / DSM 579 / HB8</strain>
    </source>
</reference>
<reference key="2">
    <citation type="submission" date="2011-07" db="PDB data bank">
        <title>Crystal structure of TTHA1842 from Thermus thermophilus HB8.</title>
        <authorList>
            <consortium name="RIKEN structural genomics initiative (RSGI)"/>
        </authorList>
    </citation>
    <scope>X-RAY CRYSTALLOGRAPHY (1.55 ANGSTROMS)</scope>
    <scope>SUBUNIT</scope>
</reference>
<feature type="chain" id="PRO_0000227196" description="Anthranilate phosphoribosyltransferase">
    <location>
        <begin position="1"/>
        <end position="329"/>
    </location>
</feature>
<feature type="binding site" evidence="1">
    <location>
        <position position="78"/>
    </location>
    <ligand>
        <name>5-phospho-alpha-D-ribose 1-diphosphate</name>
        <dbReference type="ChEBI" id="CHEBI:58017"/>
    </ligand>
</feature>
<feature type="binding site" evidence="1">
    <location>
        <position position="78"/>
    </location>
    <ligand>
        <name>anthranilate</name>
        <dbReference type="ChEBI" id="CHEBI:16567"/>
        <label>1</label>
    </ligand>
</feature>
<feature type="binding site" evidence="1">
    <location>
        <begin position="81"/>
        <end position="82"/>
    </location>
    <ligand>
        <name>5-phospho-alpha-D-ribose 1-diphosphate</name>
        <dbReference type="ChEBI" id="CHEBI:58017"/>
    </ligand>
</feature>
<feature type="binding site" evidence="1">
    <location>
        <begin position="88"/>
        <end position="91"/>
    </location>
    <ligand>
        <name>5-phospho-alpha-D-ribose 1-diphosphate</name>
        <dbReference type="ChEBI" id="CHEBI:58017"/>
    </ligand>
</feature>
<feature type="binding site" evidence="1">
    <location>
        <position position="90"/>
    </location>
    <ligand>
        <name>Mg(2+)</name>
        <dbReference type="ChEBI" id="CHEBI:18420"/>
        <label>1</label>
    </ligand>
</feature>
<feature type="binding site" evidence="1">
    <location>
        <begin position="106"/>
        <end position="114"/>
    </location>
    <ligand>
        <name>5-phospho-alpha-D-ribose 1-diphosphate</name>
        <dbReference type="ChEBI" id="CHEBI:58017"/>
    </ligand>
</feature>
<feature type="binding site" evidence="1">
    <location>
        <position position="109"/>
    </location>
    <ligand>
        <name>anthranilate</name>
        <dbReference type="ChEBI" id="CHEBI:16567"/>
        <label>1</label>
    </ligand>
</feature>
<feature type="binding site" evidence="1">
    <location>
        <position position="118"/>
    </location>
    <ligand>
        <name>5-phospho-alpha-D-ribose 1-diphosphate</name>
        <dbReference type="ChEBI" id="CHEBI:58017"/>
    </ligand>
</feature>
<feature type="binding site" evidence="1">
    <location>
        <position position="164"/>
    </location>
    <ligand>
        <name>anthranilate</name>
        <dbReference type="ChEBI" id="CHEBI:16567"/>
        <label>2</label>
    </ligand>
</feature>
<feature type="binding site" evidence="1">
    <location>
        <position position="221"/>
    </location>
    <ligand>
        <name>Mg(2+)</name>
        <dbReference type="ChEBI" id="CHEBI:18420"/>
        <label>2</label>
    </ligand>
</feature>
<feature type="binding site" evidence="1">
    <location>
        <position position="222"/>
    </location>
    <ligand>
        <name>Mg(2+)</name>
        <dbReference type="ChEBI" id="CHEBI:18420"/>
        <label>1</label>
    </ligand>
</feature>
<feature type="binding site" evidence="1">
    <location>
        <position position="222"/>
    </location>
    <ligand>
        <name>Mg(2+)</name>
        <dbReference type="ChEBI" id="CHEBI:18420"/>
        <label>2</label>
    </ligand>
</feature>
<feature type="helix" evidence="3">
    <location>
        <begin position="3"/>
        <end position="8"/>
    </location>
</feature>
<feature type="helix" evidence="3">
    <location>
        <begin position="15"/>
        <end position="26"/>
    </location>
</feature>
<feature type="helix" evidence="3">
    <location>
        <begin position="32"/>
        <end position="45"/>
    </location>
</feature>
<feature type="helix" evidence="3">
    <location>
        <begin position="49"/>
        <end position="62"/>
    </location>
</feature>
<feature type="strand" evidence="3">
    <location>
        <begin position="71"/>
        <end position="78"/>
    </location>
</feature>
<feature type="helix" evidence="3">
    <location>
        <begin position="90"/>
        <end position="99"/>
    </location>
</feature>
<feature type="strand" evidence="3">
    <location>
        <begin position="103"/>
        <end position="108"/>
    </location>
</feature>
<feature type="turn" evidence="3">
    <location>
        <begin position="112"/>
        <end position="115"/>
    </location>
</feature>
<feature type="helix" evidence="3">
    <location>
        <begin position="118"/>
        <end position="124"/>
    </location>
</feature>
<feature type="helix" evidence="3">
    <location>
        <begin position="133"/>
        <end position="143"/>
    </location>
</feature>
<feature type="strand" evidence="3">
    <location>
        <begin position="144"/>
        <end position="149"/>
    </location>
</feature>
<feature type="helix" evidence="3">
    <location>
        <begin position="150"/>
        <end position="153"/>
    </location>
</feature>
<feature type="helix" evidence="3">
    <location>
        <begin position="155"/>
        <end position="159"/>
    </location>
</feature>
<feature type="helix" evidence="3">
    <location>
        <begin position="161"/>
        <end position="167"/>
    </location>
</feature>
<feature type="helix" evidence="3">
    <location>
        <begin position="172"/>
        <end position="176"/>
    </location>
</feature>
<feature type="turn" evidence="3">
    <location>
        <begin position="177"/>
        <end position="179"/>
    </location>
</feature>
<feature type="strand" evidence="3">
    <location>
        <begin position="187"/>
        <end position="191"/>
    </location>
</feature>
<feature type="helix" evidence="3">
    <location>
        <begin position="195"/>
        <end position="197"/>
    </location>
</feature>
<feature type="helix" evidence="3">
    <location>
        <begin position="198"/>
        <end position="207"/>
    </location>
</feature>
<feature type="strand" evidence="3">
    <location>
        <begin position="211"/>
        <end position="217"/>
    </location>
</feature>
<feature type="strand" evidence="3">
    <location>
        <begin position="220"/>
        <end position="222"/>
    </location>
</feature>
<feature type="strand" evidence="3">
    <location>
        <begin position="228"/>
        <end position="232"/>
    </location>
</feature>
<feature type="turn" evidence="3">
    <location>
        <begin position="233"/>
        <end position="235"/>
    </location>
</feature>
<feature type="strand" evidence="3">
    <location>
        <begin position="236"/>
        <end position="240"/>
    </location>
</feature>
<feature type="helix" evidence="3">
    <location>
        <begin position="242"/>
        <end position="245"/>
    </location>
</feature>
<feature type="helix" evidence="3">
    <location>
        <begin position="252"/>
        <end position="255"/>
    </location>
</feature>
<feature type="helix" evidence="3">
    <location>
        <begin position="260"/>
        <end position="271"/>
    </location>
</feature>
<feature type="helix" evidence="3">
    <location>
        <begin position="278"/>
        <end position="293"/>
    </location>
</feature>
<feature type="strand" evidence="3">
    <location>
        <begin position="296"/>
        <end position="299"/>
    </location>
</feature>
<feature type="helix" evidence="3">
    <location>
        <begin position="300"/>
        <end position="313"/>
    </location>
</feature>
<feature type="helix" evidence="3">
    <location>
        <begin position="315"/>
        <end position="328"/>
    </location>
</feature>
<comment type="function">
    <text evidence="1">Catalyzes the transfer of the phosphoribosyl group of 5-phosphorylribose-1-pyrophosphate (PRPP) to anthranilate to yield N-(5'-phosphoribosyl)-anthranilate (PRA).</text>
</comment>
<comment type="catalytic activity">
    <reaction evidence="1">
        <text>N-(5-phospho-beta-D-ribosyl)anthranilate + diphosphate = 5-phospho-alpha-D-ribose 1-diphosphate + anthranilate</text>
        <dbReference type="Rhea" id="RHEA:11768"/>
        <dbReference type="ChEBI" id="CHEBI:16567"/>
        <dbReference type="ChEBI" id="CHEBI:18277"/>
        <dbReference type="ChEBI" id="CHEBI:33019"/>
        <dbReference type="ChEBI" id="CHEBI:58017"/>
        <dbReference type="EC" id="2.4.2.18"/>
    </reaction>
</comment>
<comment type="cofactor">
    <cofactor evidence="1">
        <name>Mg(2+)</name>
        <dbReference type="ChEBI" id="CHEBI:18420"/>
    </cofactor>
    <text evidence="1">Binds 2 magnesium ions per monomer.</text>
</comment>
<comment type="pathway">
    <text evidence="1">Amino-acid biosynthesis; L-tryptophan biosynthesis; L-tryptophan from chorismate: step 2/5.</text>
</comment>
<comment type="subunit">
    <text evidence="1 2">Homodimer.</text>
</comment>
<comment type="similarity">
    <text evidence="1">Belongs to the anthranilate phosphoribosyltransferase family.</text>
</comment>
<protein>
    <recommendedName>
        <fullName evidence="1">Anthranilate phosphoribosyltransferase</fullName>
        <ecNumber evidence="1">2.4.2.18</ecNumber>
    </recommendedName>
</protein>
<sequence length="329" mass="34275">MDAVKKAILGEVLEEEEAYEVMRALMAGEVSPVRAAGLLVALSLRGERPHEIAAMARAMREAARPLRVHRRPLLDIVGTGGDGKGLMNLSTLAALVAAAGGVAVAKHGNRAASSRAGSADLLEALGVDLEAPPERVGEAIEELGFGFLFARVFHPAMRHVAPVRAELGVRTVFNLLGPLTNPAGADAYVLGVFSPEWLAPMAEALERLGARGLVVHGEGADELVLGENRVVEVGKGAYALTPEEVGLKRAPLEALKGGGPEENAALARRLLKGEEKGPLADAVALAAGAGFYAAGKTPSLKEGVALAREVLASGEAYLLLERYVAFLRA</sequence>
<evidence type="ECO:0000255" key="1">
    <source>
        <dbReference type="HAMAP-Rule" id="MF_00211"/>
    </source>
</evidence>
<evidence type="ECO:0000269" key="2">
    <source ref="2"/>
</evidence>
<evidence type="ECO:0007829" key="3">
    <source>
        <dbReference type="PDB" id="2ELC"/>
    </source>
</evidence>
<accession>Q5SH88</accession>
<keyword id="KW-0002">3D-structure</keyword>
<keyword id="KW-0028">Amino-acid biosynthesis</keyword>
<keyword id="KW-0057">Aromatic amino acid biosynthesis</keyword>
<keyword id="KW-0328">Glycosyltransferase</keyword>
<keyword id="KW-0460">Magnesium</keyword>
<keyword id="KW-0479">Metal-binding</keyword>
<keyword id="KW-1185">Reference proteome</keyword>
<keyword id="KW-0808">Transferase</keyword>
<keyword id="KW-0822">Tryptophan biosynthesis</keyword>
<proteinExistence type="evidence at protein level"/>
<gene>
    <name evidence="1" type="primary">trpD</name>
    <name type="ordered locus">TTHA1842</name>
</gene>